<dbReference type="EMBL" id="AY780259">
    <property type="protein sequence ID" value="AAX21015.1"/>
    <property type="molecule type" value="Genomic_DNA"/>
</dbReference>
<dbReference type="RefSeq" id="YP_636285.1">
    <property type="nucleotide sequence ID" value="NC_008115.1"/>
</dbReference>
<dbReference type="SMR" id="Q49L12"/>
<dbReference type="GeneID" id="4108478"/>
<dbReference type="GO" id="GO:0009535">
    <property type="term" value="C:chloroplast thylakoid membrane"/>
    <property type="evidence" value="ECO:0007669"/>
    <property type="project" value="UniProtKB-SubCell"/>
</dbReference>
<dbReference type="GO" id="GO:0045259">
    <property type="term" value="C:proton-transporting ATP synthase complex"/>
    <property type="evidence" value="ECO:0007669"/>
    <property type="project" value="UniProtKB-KW"/>
</dbReference>
<dbReference type="GO" id="GO:0046933">
    <property type="term" value="F:proton-transporting ATP synthase activity, rotational mechanism"/>
    <property type="evidence" value="ECO:0007669"/>
    <property type="project" value="UniProtKB-UniRule"/>
</dbReference>
<dbReference type="CDD" id="cd06503">
    <property type="entry name" value="ATP-synt_Fo_b"/>
    <property type="match status" value="1"/>
</dbReference>
<dbReference type="HAMAP" id="MF_01398">
    <property type="entry name" value="ATP_synth_b_bprime"/>
    <property type="match status" value="1"/>
</dbReference>
<dbReference type="InterPro" id="IPR002146">
    <property type="entry name" value="ATP_synth_b/b'su_bac/chlpt"/>
</dbReference>
<dbReference type="PANTHER" id="PTHR34264">
    <property type="entry name" value="ATP SYNTHASE SUBUNIT B, CHLOROPLASTIC"/>
    <property type="match status" value="1"/>
</dbReference>
<dbReference type="PANTHER" id="PTHR34264:SF3">
    <property type="entry name" value="ATP SYNTHASE SUBUNIT B, CHLOROPLASTIC"/>
    <property type="match status" value="1"/>
</dbReference>
<dbReference type="Pfam" id="PF00430">
    <property type="entry name" value="ATP-synt_B"/>
    <property type="match status" value="1"/>
</dbReference>
<sequence>MKNVTDSFVSLGHWPSAGSFGFNTDILATNPINLSVVLGVLIFFGKGVLSDLLDNRKQRILNTIRNSEELRGGAIEQLEKARARLRKVEMEAEQFRVNGYSEIEQEKLNLINSTYKTLEQLENYKNETIHFEQQRAINQVRQRVFQQALQGALGTLNSCLNNELHLRTISANIGMFGAMKEITD</sequence>
<accession>Q49L12</accession>
<geneLocation type="chloroplast"/>
<name>ATPF_EUCGG</name>
<feature type="chain" id="PRO_0000368932" description="ATP synthase subunit b, chloroplastic">
    <location>
        <begin position="1"/>
        <end position="184"/>
    </location>
</feature>
<feature type="transmembrane region" description="Helical" evidence="1">
    <location>
        <begin position="27"/>
        <end position="49"/>
    </location>
</feature>
<evidence type="ECO:0000255" key="1">
    <source>
        <dbReference type="HAMAP-Rule" id="MF_01398"/>
    </source>
</evidence>
<organism>
    <name type="scientific">Eucalyptus globulus subsp. globulus</name>
    <name type="common">Tasmanian blue gum</name>
    <dbReference type="NCBI Taxonomy" id="71271"/>
    <lineage>
        <taxon>Eukaryota</taxon>
        <taxon>Viridiplantae</taxon>
        <taxon>Streptophyta</taxon>
        <taxon>Embryophyta</taxon>
        <taxon>Tracheophyta</taxon>
        <taxon>Spermatophyta</taxon>
        <taxon>Magnoliopsida</taxon>
        <taxon>eudicotyledons</taxon>
        <taxon>Gunneridae</taxon>
        <taxon>Pentapetalae</taxon>
        <taxon>rosids</taxon>
        <taxon>malvids</taxon>
        <taxon>Myrtales</taxon>
        <taxon>Myrtaceae</taxon>
        <taxon>Myrtoideae</taxon>
        <taxon>Eucalypteae</taxon>
        <taxon>Eucalyptus</taxon>
    </lineage>
</organism>
<keyword id="KW-0066">ATP synthesis</keyword>
<keyword id="KW-0138">CF(0)</keyword>
<keyword id="KW-0150">Chloroplast</keyword>
<keyword id="KW-0375">Hydrogen ion transport</keyword>
<keyword id="KW-0406">Ion transport</keyword>
<keyword id="KW-0472">Membrane</keyword>
<keyword id="KW-0934">Plastid</keyword>
<keyword id="KW-0793">Thylakoid</keyword>
<keyword id="KW-0812">Transmembrane</keyword>
<keyword id="KW-1133">Transmembrane helix</keyword>
<keyword id="KW-0813">Transport</keyword>
<comment type="function">
    <text evidence="1">F(1)F(0) ATP synthase produces ATP from ADP in the presence of a proton or sodium gradient. F-type ATPases consist of two structural domains, F(1) containing the extramembraneous catalytic core and F(0) containing the membrane proton channel, linked together by a central stalk and a peripheral stalk. During catalysis, ATP synthesis in the catalytic domain of F(1) is coupled via a rotary mechanism of the central stalk subunits to proton translocation.</text>
</comment>
<comment type="function">
    <text evidence="1">Component of the F(0) channel, it forms part of the peripheral stalk, linking F(1) to F(0).</text>
</comment>
<comment type="subunit">
    <text evidence="1">F-type ATPases have 2 components, F(1) - the catalytic core - and F(0) - the membrane proton channel. F(1) has five subunits: alpha(3), beta(3), gamma(1), delta(1), epsilon(1). F(0) has four main subunits: a(1), b(1), b'(1) and c(10-14). The alpha and beta chains form an alternating ring which encloses part of the gamma chain. F(1) is attached to F(0) by a central stalk formed by the gamma and epsilon chains, while a peripheral stalk is formed by the delta, b and b' chains.</text>
</comment>
<comment type="subcellular location">
    <subcellularLocation>
        <location evidence="1">Plastid</location>
        <location evidence="1">Chloroplast thylakoid membrane</location>
        <topology evidence="1">Single-pass membrane protein</topology>
    </subcellularLocation>
</comment>
<comment type="miscellaneous">
    <text>In plastids the F-type ATPase is also known as CF(1)CF(0).</text>
</comment>
<comment type="similarity">
    <text evidence="1">Belongs to the ATPase B chain family.</text>
</comment>
<reference key="1">
    <citation type="journal article" date="2005" name="DNA Res.">
        <title>Complete nucleotide sequence of the chloroplast genome from the Tasmanian blue gum, Eucalyptus globulus (Myrtaceae).</title>
        <authorList>
            <person name="Steane D.A."/>
        </authorList>
    </citation>
    <scope>NUCLEOTIDE SEQUENCE [LARGE SCALE GENOMIC DNA]</scope>
</reference>
<protein>
    <recommendedName>
        <fullName evidence="1">ATP synthase subunit b, chloroplastic</fullName>
    </recommendedName>
    <alternativeName>
        <fullName evidence="1">ATP synthase F(0) sector subunit b</fullName>
    </alternativeName>
    <alternativeName>
        <fullName evidence="1">ATPase subunit I</fullName>
    </alternativeName>
</protein>
<gene>
    <name evidence="1" type="primary">atpF</name>
</gene>
<proteinExistence type="inferred from homology"/>